<keyword id="KW-1003">Cell membrane</keyword>
<keyword id="KW-0285">Flavoprotein</keyword>
<keyword id="KW-0288">FMN</keyword>
<keyword id="KW-0472">Membrane</keyword>
<keyword id="KW-0560">Oxidoreductase</keyword>
<keyword id="KW-0665">Pyrimidine biosynthesis</keyword>
<keyword id="KW-1185">Reference proteome</keyword>
<name>PYRD_CHLAA</name>
<feature type="chain" id="PRO_0000336462" description="Dihydroorotate dehydrogenase (quinone)">
    <location>
        <begin position="1"/>
        <end position="363"/>
    </location>
</feature>
<feature type="active site" description="Nucleophile" evidence="1">
    <location>
        <position position="191"/>
    </location>
</feature>
<feature type="binding site" evidence="1">
    <location>
        <begin position="77"/>
        <end position="81"/>
    </location>
    <ligand>
        <name>FMN</name>
        <dbReference type="ChEBI" id="CHEBI:58210"/>
    </ligand>
</feature>
<feature type="binding site" evidence="1">
    <location>
        <position position="81"/>
    </location>
    <ligand>
        <name>substrate</name>
    </ligand>
</feature>
<feature type="binding site" evidence="1">
    <location>
        <position position="101"/>
    </location>
    <ligand>
        <name>FMN</name>
        <dbReference type="ChEBI" id="CHEBI:58210"/>
    </ligand>
</feature>
<feature type="binding site" evidence="1">
    <location>
        <begin position="126"/>
        <end position="130"/>
    </location>
    <ligand>
        <name>substrate</name>
    </ligand>
</feature>
<feature type="binding site" evidence="1">
    <location>
        <position position="155"/>
    </location>
    <ligand>
        <name>FMN</name>
        <dbReference type="ChEBI" id="CHEBI:58210"/>
    </ligand>
</feature>
<feature type="binding site" evidence="1">
    <location>
        <position position="188"/>
    </location>
    <ligand>
        <name>FMN</name>
        <dbReference type="ChEBI" id="CHEBI:58210"/>
    </ligand>
</feature>
<feature type="binding site" evidence="1">
    <location>
        <position position="188"/>
    </location>
    <ligand>
        <name>substrate</name>
    </ligand>
</feature>
<feature type="binding site" evidence="1">
    <location>
        <position position="193"/>
    </location>
    <ligand>
        <name>substrate</name>
    </ligand>
</feature>
<feature type="binding site" evidence="1">
    <location>
        <position position="234"/>
    </location>
    <ligand>
        <name>FMN</name>
        <dbReference type="ChEBI" id="CHEBI:58210"/>
    </ligand>
</feature>
<feature type="binding site" evidence="1">
    <location>
        <position position="262"/>
    </location>
    <ligand>
        <name>FMN</name>
        <dbReference type="ChEBI" id="CHEBI:58210"/>
    </ligand>
</feature>
<feature type="binding site" evidence="1">
    <location>
        <begin position="263"/>
        <end position="264"/>
    </location>
    <ligand>
        <name>substrate</name>
    </ligand>
</feature>
<feature type="binding site" evidence="1">
    <location>
        <position position="287"/>
    </location>
    <ligand>
        <name>FMN</name>
        <dbReference type="ChEBI" id="CHEBI:58210"/>
    </ligand>
</feature>
<feature type="binding site" evidence="1">
    <location>
        <position position="316"/>
    </location>
    <ligand>
        <name>FMN</name>
        <dbReference type="ChEBI" id="CHEBI:58210"/>
    </ligand>
</feature>
<feature type="binding site" evidence="1">
    <location>
        <begin position="337"/>
        <end position="338"/>
    </location>
    <ligand>
        <name>FMN</name>
        <dbReference type="ChEBI" id="CHEBI:58210"/>
    </ligand>
</feature>
<protein>
    <recommendedName>
        <fullName evidence="1">Dihydroorotate dehydrogenase (quinone)</fullName>
        <ecNumber evidence="1">1.3.5.2</ecNumber>
    </recommendedName>
    <alternativeName>
        <fullName evidence="1">DHOdehase</fullName>
        <shortName evidence="1">DHOD</shortName>
        <shortName evidence="1">DHODase</shortName>
    </alternativeName>
    <alternativeName>
        <fullName evidence="1">Dihydroorotate oxidase</fullName>
    </alternativeName>
</protein>
<organism>
    <name type="scientific">Chloroflexus aurantiacus (strain ATCC 29366 / DSM 635 / J-10-fl)</name>
    <dbReference type="NCBI Taxonomy" id="324602"/>
    <lineage>
        <taxon>Bacteria</taxon>
        <taxon>Bacillati</taxon>
        <taxon>Chloroflexota</taxon>
        <taxon>Chloroflexia</taxon>
        <taxon>Chloroflexales</taxon>
        <taxon>Chloroflexineae</taxon>
        <taxon>Chloroflexaceae</taxon>
        <taxon>Chloroflexus</taxon>
    </lineage>
</organism>
<sequence length="363" mass="39418">MNRSEALFYRYGIRPILFRLGRGDAETAHERTLHILALISRSRLLCKTIGYLTTIRDQRLQRTVCGIPFPNPVGLAAGMDKDGVAIPAWAALGFGFVEVGTVTHHPQPGNPRPRLFRLPEQEALINRMGFNNQGAASLARRLARLQPAPIPVGVSIGKSKITPLEQAIDDYRASFRQLFPYAAYIAINVSSPNTPGLRQLQDADQLRALLAALQHDNAELGRTDQRGPRPLLVKIAPDLSDTAIEEVLTVCADHGVAGIIATNTTISREGLTGVDPRLAAEAGGLSGRPLIARALHVVRLIARLTGNRLPIIGVGGIHTPDDGLRMLEAGASLIQIYTGLVYYGPLLPRRINRAILTHSKVQQ</sequence>
<accession>A9WDI1</accession>
<comment type="function">
    <text evidence="1">Catalyzes the conversion of dihydroorotate to orotate with quinone as electron acceptor.</text>
</comment>
<comment type="catalytic activity">
    <reaction evidence="1">
        <text>(S)-dihydroorotate + a quinone = orotate + a quinol</text>
        <dbReference type="Rhea" id="RHEA:30187"/>
        <dbReference type="ChEBI" id="CHEBI:24646"/>
        <dbReference type="ChEBI" id="CHEBI:30839"/>
        <dbReference type="ChEBI" id="CHEBI:30864"/>
        <dbReference type="ChEBI" id="CHEBI:132124"/>
        <dbReference type="EC" id="1.3.5.2"/>
    </reaction>
</comment>
<comment type="cofactor">
    <cofactor evidence="1">
        <name>FMN</name>
        <dbReference type="ChEBI" id="CHEBI:58210"/>
    </cofactor>
    <text evidence="1">Binds 1 FMN per subunit.</text>
</comment>
<comment type="pathway">
    <text evidence="1">Pyrimidine metabolism; UMP biosynthesis via de novo pathway; orotate from (S)-dihydroorotate (quinone route): step 1/1.</text>
</comment>
<comment type="subunit">
    <text evidence="1">Monomer.</text>
</comment>
<comment type="subcellular location">
    <subcellularLocation>
        <location evidence="1">Cell membrane</location>
        <topology evidence="1">Peripheral membrane protein</topology>
    </subcellularLocation>
</comment>
<comment type="similarity">
    <text evidence="1">Belongs to the dihydroorotate dehydrogenase family. Type 2 subfamily.</text>
</comment>
<gene>
    <name evidence="1" type="primary">pyrD</name>
    <name type="ordered locus">Caur_3923</name>
</gene>
<evidence type="ECO:0000255" key="1">
    <source>
        <dbReference type="HAMAP-Rule" id="MF_00225"/>
    </source>
</evidence>
<proteinExistence type="inferred from homology"/>
<reference key="1">
    <citation type="journal article" date="2011" name="BMC Genomics">
        <title>Complete genome sequence of the filamentous anoxygenic phototrophic bacterium Chloroflexus aurantiacus.</title>
        <authorList>
            <person name="Tang K.H."/>
            <person name="Barry K."/>
            <person name="Chertkov O."/>
            <person name="Dalin E."/>
            <person name="Han C.S."/>
            <person name="Hauser L.J."/>
            <person name="Honchak B.M."/>
            <person name="Karbach L.E."/>
            <person name="Land M.L."/>
            <person name="Lapidus A."/>
            <person name="Larimer F.W."/>
            <person name="Mikhailova N."/>
            <person name="Pitluck S."/>
            <person name="Pierson B.K."/>
            <person name="Blankenship R.E."/>
        </authorList>
    </citation>
    <scope>NUCLEOTIDE SEQUENCE [LARGE SCALE GENOMIC DNA]</scope>
    <source>
        <strain>ATCC 29366 / DSM 635 / J-10-fl</strain>
    </source>
</reference>
<dbReference type="EC" id="1.3.5.2" evidence="1"/>
<dbReference type="EMBL" id="CP000909">
    <property type="protein sequence ID" value="ABY37100.1"/>
    <property type="molecule type" value="Genomic_DNA"/>
</dbReference>
<dbReference type="RefSeq" id="WP_012259753.1">
    <property type="nucleotide sequence ID" value="NC_010175.1"/>
</dbReference>
<dbReference type="RefSeq" id="YP_001637489.1">
    <property type="nucleotide sequence ID" value="NC_010175.1"/>
</dbReference>
<dbReference type="SMR" id="A9WDI1"/>
<dbReference type="STRING" id="324602.Caur_3923"/>
<dbReference type="EnsemblBacteria" id="ABY37100">
    <property type="protein sequence ID" value="ABY37100"/>
    <property type="gene ID" value="Caur_3923"/>
</dbReference>
<dbReference type="KEGG" id="cau:Caur_3923"/>
<dbReference type="PATRIC" id="fig|324602.8.peg.4398"/>
<dbReference type="eggNOG" id="COG0167">
    <property type="taxonomic scope" value="Bacteria"/>
</dbReference>
<dbReference type="HOGENOM" id="CLU_013640_2_0_0"/>
<dbReference type="InParanoid" id="A9WDI1"/>
<dbReference type="UniPathway" id="UPA00070">
    <property type="reaction ID" value="UER00946"/>
</dbReference>
<dbReference type="Proteomes" id="UP000002008">
    <property type="component" value="Chromosome"/>
</dbReference>
<dbReference type="GO" id="GO:0005737">
    <property type="term" value="C:cytoplasm"/>
    <property type="evidence" value="ECO:0007669"/>
    <property type="project" value="InterPro"/>
</dbReference>
<dbReference type="GO" id="GO:0005886">
    <property type="term" value="C:plasma membrane"/>
    <property type="evidence" value="ECO:0007669"/>
    <property type="project" value="UniProtKB-SubCell"/>
</dbReference>
<dbReference type="GO" id="GO:0106430">
    <property type="term" value="F:dihydroorotate dehydrogenase (quinone) activity"/>
    <property type="evidence" value="ECO:0007669"/>
    <property type="project" value="UniProtKB-EC"/>
</dbReference>
<dbReference type="GO" id="GO:0004152">
    <property type="term" value="F:dihydroorotate dehydrogenase activity"/>
    <property type="evidence" value="ECO:0000318"/>
    <property type="project" value="GO_Central"/>
</dbReference>
<dbReference type="GO" id="GO:0006207">
    <property type="term" value="P:'de novo' pyrimidine nucleobase biosynthetic process"/>
    <property type="evidence" value="ECO:0000318"/>
    <property type="project" value="GO_Central"/>
</dbReference>
<dbReference type="GO" id="GO:0044205">
    <property type="term" value="P:'de novo' UMP biosynthetic process"/>
    <property type="evidence" value="ECO:0007669"/>
    <property type="project" value="UniProtKB-UniRule"/>
</dbReference>
<dbReference type="GO" id="GO:0009220">
    <property type="term" value="P:pyrimidine ribonucleotide biosynthetic process"/>
    <property type="evidence" value="ECO:0000318"/>
    <property type="project" value="GO_Central"/>
</dbReference>
<dbReference type="CDD" id="cd04738">
    <property type="entry name" value="DHOD_2_like"/>
    <property type="match status" value="1"/>
</dbReference>
<dbReference type="Gene3D" id="3.20.20.70">
    <property type="entry name" value="Aldolase class I"/>
    <property type="match status" value="1"/>
</dbReference>
<dbReference type="HAMAP" id="MF_00225">
    <property type="entry name" value="DHO_dh_type2"/>
    <property type="match status" value="1"/>
</dbReference>
<dbReference type="InterPro" id="IPR013785">
    <property type="entry name" value="Aldolase_TIM"/>
</dbReference>
<dbReference type="InterPro" id="IPR050074">
    <property type="entry name" value="DHO_dehydrogenase"/>
</dbReference>
<dbReference type="InterPro" id="IPR005719">
    <property type="entry name" value="Dihydroorotate_DH_2"/>
</dbReference>
<dbReference type="InterPro" id="IPR005720">
    <property type="entry name" value="Dihydroorotate_DH_cat"/>
</dbReference>
<dbReference type="InterPro" id="IPR001295">
    <property type="entry name" value="Dihydroorotate_DH_CS"/>
</dbReference>
<dbReference type="NCBIfam" id="NF003652">
    <property type="entry name" value="PRK05286.2-5"/>
    <property type="match status" value="1"/>
</dbReference>
<dbReference type="NCBIfam" id="TIGR01036">
    <property type="entry name" value="pyrD_sub2"/>
    <property type="match status" value="1"/>
</dbReference>
<dbReference type="PANTHER" id="PTHR48109:SF4">
    <property type="entry name" value="DIHYDROOROTATE DEHYDROGENASE (QUINONE), MITOCHONDRIAL"/>
    <property type="match status" value="1"/>
</dbReference>
<dbReference type="PANTHER" id="PTHR48109">
    <property type="entry name" value="DIHYDROOROTATE DEHYDROGENASE (QUINONE), MITOCHONDRIAL-RELATED"/>
    <property type="match status" value="1"/>
</dbReference>
<dbReference type="Pfam" id="PF01180">
    <property type="entry name" value="DHO_dh"/>
    <property type="match status" value="1"/>
</dbReference>
<dbReference type="SUPFAM" id="SSF51395">
    <property type="entry name" value="FMN-linked oxidoreductases"/>
    <property type="match status" value="1"/>
</dbReference>
<dbReference type="PROSITE" id="PS00911">
    <property type="entry name" value="DHODEHASE_1"/>
    <property type="match status" value="1"/>
</dbReference>